<reference key="1">
    <citation type="journal article" date="1998" name="Arch. Virol.">
        <title>Hepatitis B virus genomic sequence in the circulation of hepatocellular carcinoma patients: comparative analysis of 40 full-length isolates.</title>
        <authorList>
            <person name="Takahashi K."/>
            <person name="Akahane Y."/>
            <person name="Hino K."/>
            <person name="Ohta Y."/>
            <person name="Mishiro S."/>
        </authorList>
    </citation>
    <scope>NUCLEOTIDE SEQUENCE [GENOMIC DNA]</scope>
</reference>
<protein>
    <recommendedName>
        <fullName evidence="2">External core antigen</fullName>
    </recommendedName>
    <alternativeName>
        <fullName evidence="2">HBeAg</fullName>
    </alternativeName>
    <alternativeName>
        <fullName evidence="2">Precore protein</fullName>
    </alternativeName>
    <alternativeName>
        <fullName evidence="2">p25</fullName>
    </alternativeName>
</protein>
<organism>
    <name type="scientific">Hepatitis B virus genotype A2 (isolate Japan/11D11HCCW/1998)</name>
    <name type="common">HBV-A</name>
    <dbReference type="NCBI Taxonomy" id="489457"/>
    <lineage>
        <taxon>Viruses</taxon>
        <taxon>Riboviria</taxon>
        <taxon>Pararnavirae</taxon>
        <taxon>Artverviricota</taxon>
        <taxon>Revtraviricetes</taxon>
        <taxon>Blubervirales</taxon>
        <taxon>Hepadnaviridae</taxon>
        <taxon>Orthohepadnavirus</taxon>
        <taxon>Hepatitis B virus</taxon>
    </lineage>
</organism>
<keyword id="KW-0024">Alternative initiation</keyword>
<keyword id="KW-1015">Disulfide bond</keyword>
<keyword id="KW-1048">Host nucleus</keyword>
<keyword id="KW-0945">Host-virus interaction</keyword>
<keyword id="KW-0677">Repeat</keyword>
<keyword id="KW-0964">Secreted</keyword>
<keyword id="KW-0732">Signal</keyword>
<keyword id="KW-0899">Viral immunoevasion</keyword>
<sequence length="214" mass="24685">MQLFHLCLIISCTCPTVQASKLCLGWLWGMDIDPYKEFGATVELLSFLPSDFFPSVRDLLDTASALYREALESPEHCSPHHTALRQAILCWVELMTLATWVGNNLQDPASRDLVVNYVNTNMGLKIRQLLWFHISCLTFGRETVLEYLVSFGVWIRTPPAYRPPNAPILSTLPETTVVRRRDRGRSPRRRTPSPRRRRSQSPRRRRSQSRESQC</sequence>
<organismHost>
    <name type="scientific">Homo sapiens</name>
    <name type="common">Human</name>
    <dbReference type="NCBI Taxonomy" id="9606"/>
</organismHost>
<organismHost>
    <name type="scientific">Pan troglodytes</name>
    <name type="common">Chimpanzee</name>
    <dbReference type="NCBI Taxonomy" id="9598"/>
</organismHost>
<accession>O91532</accession>
<comment type="function">
    <text evidence="2">May regulate immune response to the intracellular capsid in acting as a T-cell tolerogen, by having an immunoregulatory effect which prevents destruction of infected cells by cytotoxic T-cells. This immune regulation may predispose to chronicity during perinatal infections and prevent severe liver injury during adult infections.</text>
</comment>
<comment type="subunit">
    <text evidence="2">Homodimerizes.</text>
</comment>
<comment type="subcellular location">
    <subcellularLocation>
        <location evidence="2">Secreted</location>
    </subcellularLocation>
    <subcellularLocation>
        <location evidence="2">Host nucleus</location>
    </subcellularLocation>
</comment>
<comment type="alternative products">
    <event type="alternative initiation"/>
    <isoform>
        <id>O91532-1</id>
        <name>External core antigen</name>
        <sequence type="displayed"/>
    </isoform>
    <isoform>
        <id>P0C696-1</id>
        <name>Capsid protein</name>
        <sequence type="external"/>
    </isoform>
</comment>
<comment type="PTM">
    <text evidence="2">Phosphorylated.</text>
</comment>
<comment type="PTM">
    <text evidence="2">Cleaved by host furin.</text>
</comment>
<comment type="similarity">
    <text evidence="2">Belongs to the orthohepadnavirus precore antigen family.</text>
</comment>
<dbReference type="EMBL" id="AB014370">
    <property type="protein sequence ID" value="BAA32870.1"/>
    <property type="molecule type" value="Genomic_DNA"/>
</dbReference>
<dbReference type="PIR" id="C94409">
    <property type="entry name" value="NKVLA3"/>
</dbReference>
<dbReference type="PIR" id="S33686">
    <property type="entry name" value="S33686"/>
</dbReference>
<dbReference type="SMR" id="O91532"/>
<dbReference type="Proteomes" id="UP000007910">
    <property type="component" value="Genome"/>
</dbReference>
<dbReference type="GO" id="GO:0005576">
    <property type="term" value="C:extracellular region"/>
    <property type="evidence" value="ECO:0007669"/>
    <property type="project" value="UniProtKB-SubCell"/>
</dbReference>
<dbReference type="GO" id="GO:0043657">
    <property type="term" value="C:host cell"/>
    <property type="evidence" value="ECO:0007669"/>
    <property type="project" value="GOC"/>
</dbReference>
<dbReference type="GO" id="GO:0030430">
    <property type="term" value="C:host cell cytoplasm"/>
    <property type="evidence" value="ECO:0007669"/>
    <property type="project" value="UniProtKB-UniRule"/>
</dbReference>
<dbReference type="GO" id="GO:0042025">
    <property type="term" value="C:host cell nucleus"/>
    <property type="evidence" value="ECO:0007669"/>
    <property type="project" value="UniProtKB-SubCell"/>
</dbReference>
<dbReference type="GO" id="GO:0039619">
    <property type="term" value="C:T=4 icosahedral viral capsid"/>
    <property type="evidence" value="ECO:0007669"/>
    <property type="project" value="UniProtKB-UniRule"/>
</dbReference>
<dbReference type="GO" id="GO:0003677">
    <property type="term" value="F:DNA binding"/>
    <property type="evidence" value="ECO:0007669"/>
    <property type="project" value="UniProtKB-UniRule"/>
</dbReference>
<dbReference type="GO" id="GO:0003723">
    <property type="term" value="F:RNA binding"/>
    <property type="evidence" value="ECO:0007669"/>
    <property type="project" value="UniProtKB-UniRule"/>
</dbReference>
<dbReference type="GO" id="GO:0005198">
    <property type="term" value="F:structural molecule activity"/>
    <property type="evidence" value="ECO:0007669"/>
    <property type="project" value="UniProtKB-UniRule"/>
</dbReference>
<dbReference type="GO" id="GO:0075521">
    <property type="term" value="P:microtubule-dependent intracellular transport of viral material towards nucleus"/>
    <property type="evidence" value="ECO:0007669"/>
    <property type="project" value="UniProtKB-UniRule"/>
</dbReference>
<dbReference type="GO" id="GO:0046718">
    <property type="term" value="P:symbiont entry into host cell"/>
    <property type="evidence" value="ECO:0007669"/>
    <property type="project" value="UniProtKB-UniRule"/>
</dbReference>
<dbReference type="GO" id="GO:0075732">
    <property type="term" value="P:viral penetration into host nucleus"/>
    <property type="evidence" value="ECO:0007669"/>
    <property type="project" value="UniProtKB-UniRule"/>
</dbReference>
<dbReference type="FunFam" id="1.10.4090.10:FF:000001">
    <property type="entry name" value="Capsid protein"/>
    <property type="match status" value="1"/>
</dbReference>
<dbReference type="Gene3D" id="1.10.4090.10">
    <property type="entry name" value="Viral capsid, core domain supefamily, Hepatitis B virus"/>
    <property type="match status" value="1"/>
</dbReference>
<dbReference type="HAMAP" id="MF_04076">
    <property type="entry name" value="HBV_HBEAG"/>
    <property type="match status" value="1"/>
</dbReference>
<dbReference type="InterPro" id="IPR013195">
    <property type="entry name" value="Hepatitis_B_virus_capsid_N"/>
</dbReference>
<dbReference type="InterPro" id="IPR002006">
    <property type="entry name" value="Hepatitis_core"/>
</dbReference>
<dbReference type="InterPro" id="IPR036459">
    <property type="entry name" value="Viral_capsid_core_dom_sf_HBV"/>
</dbReference>
<dbReference type="Pfam" id="PF08290">
    <property type="entry name" value="Hep_core_N"/>
    <property type="match status" value="1"/>
</dbReference>
<dbReference type="Pfam" id="PF00906">
    <property type="entry name" value="Hepatitis_core"/>
    <property type="match status" value="2"/>
</dbReference>
<dbReference type="SUPFAM" id="SSF47852">
    <property type="entry name" value="Hepatitis B viral capsid (hbcag)"/>
    <property type="match status" value="1"/>
</dbReference>
<evidence type="ECO:0000250" key="1"/>
<evidence type="ECO:0000255" key="2">
    <source>
        <dbReference type="HAMAP-Rule" id="MF_04076"/>
    </source>
</evidence>
<evidence type="ECO:0000256" key="3">
    <source>
        <dbReference type="SAM" id="MobiDB-lite"/>
    </source>
</evidence>
<feature type="signal peptide" evidence="2">
    <location>
        <begin position="1"/>
        <end position="19"/>
    </location>
</feature>
<feature type="chain" id="PRO_0000324696" description="External core antigen" evidence="2">
    <location>
        <begin position="20"/>
        <end position="214"/>
    </location>
</feature>
<feature type="propeptide" id="PRO_0000324697" evidence="1">
    <location>
        <begin position="186"/>
        <end position="214"/>
    </location>
</feature>
<feature type="repeat" description="1; half-length">
    <location>
        <begin position="186"/>
        <end position="192"/>
    </location>
</feature>
<feature type="repeat" description="2">
    <location>
        <begin position="193"/>
        <end position="200"/>
    </location>
</feature>
<feature type="repeat" description="3">
    <location>
        <begin position="201"/>
        <end position="208"/>
    </location>
</feature>
<feature type="region of interest" description="HBEAG" evidence="2">
    <location>
        <begin position="25"/>
        <end position="27"/>
    </location>
</feature>
<feature type="region of interest" description="Disordered" evidence="3">
    <location>
        <begin position="165"/>
        <end position="214"/>
    </location>
</feature>
<feature type="region of interest" description="3 X 8 AA repeats of S-P-R-R-R-R-S-Q">
    <location>
        <begin position="186"/>
        <end position="208"/>
    </location>
</feature>
<feature type="compositionally biased region" description="Basic residues" evidence="3">
    <location>
        <begin position="178"/>
        <end position="207"/>
    </location>
</feature>
<feature type="site" description="Cleavage; by host" evidence="2">
    <location>
        <begin position="185"/>
        <end position="186"/>
    </location>
</feature>
<feature type="disulfide bond" description="Interchain" evidence="2">
    <location>
        <position position="77"/>
    </location>
</feature>
<feature type="disulfide bond" description="Interchain" evidence="2">
    <location>
        <position position="90"/>
    </location>
</feature>
<proteinExistence type="inferred from homology"/>
<name>HBEAG_HBVA7</name>
<gene>
    <name evidence="2" type="primary">C</name>
</gene>